<gene>
    <name type="primary">boxC</name>
</gene>
<sequence>MQAVANKPVAELVDYRTEPSKYRHWSLATDGEIATLTLNIDEDGGIRPGYKLKLNSYDLGVDIELHDALQRVRFEHPEVRTVVVTSGKPKIFCSGANIYMLGLSTHAWKVNFCKFTNETRNGIEDSSQYSGLKFLAACNGTTAGGGYELALACDEIVLVDDRNSSVSLPEVPLLGVLPGTGGLTRVTDKRRVRRDHADIFCTISEGVRGQRAKDWRLVDDVVKQQQFAEHIQARAKALAQTSDRPAGAKGVKLTTLERTVDEKGYHYEFVDATIDADGRTVTLTVRAPAAVTAKTAAEIEAQGIKWWPLQMARELDDAILNLRTNHLDVGLWQLRTEGDAQVVLDIDATIDANRDNWFVRETIGMLRRTLARIDVSSRSLYALIEPGSCFAGTLLEIALAADRSYMLDAAEAKNVVGLSAMNFGTFPMVNGLSRIDARFYQEEAPVAAVKAKQGSLLSPAEAMELGLVTAIPDDLDWAEEVRIAIEERAALSPDALTGLEANLRFGPVETMNTRIFGRLSAWQNWIFNRPNAVGENGALKLFGSGKKAQFDWNRV</sequence>
<name>BOXC_AROEV</name>
<feature type="chain" id="PRO_0000350728" description="Benzoyl-CoA-dihydrodiol lyase">
    <location>
        <begin position="1"/>
        <end position="555"/>
    </location>
</feature>
<comment type="function">
    <text evidence="2">Catalyzes the ring opening of 2,3-epoxy-2,3-dihydroxybenzoyl-CoA to form 3,4-didehydroadipyl-CoA semialdehyde.</text>
</comment>
<comment type="catalytic activity">
    <reaction evidence="2 3">
        <text>2,3-epoxy-2,3-dihydrobenzoyl-CoA + 2 H2O = (3Z)-6-oxohex-3-enoyl-CoA + formate + H(+)</text>
        <dbReference type="Rhea" id="RHEA:48308"/>
        <dbReference type="ChEBI" id="CHEBI:15377"/>
        <dbReference type="ChEBI" id="CHEBI:15378"/>
        <dbReference type="ChEBI" id="CHEBI:15740"/>
        <dbReference type="ChEBI" id="CHEBI:58787"/>
        <dbReference type="ChEBI" id="CHEBI:88118"/>
        <dbReference type="EC" id="4.1.2.44"/>
    </reaction>
</comment>
<comment type="biophysicochemical properties">
    <kinetics>
        <KM evidence="2">17 uM for 2,3-epoxy-2,3-dihydroxybenzoyl-CoA</KM>
        <Vmax evidence="2">4.9 umol/min/mg enzyme for the forward reaction</Vmax>
        <text evidence="5">The substrate was earlier believed to be 2,3-dihydro-2,3-dihydroxybenzoyl-CoA but it has later been shown to be the epoxide as the substrate was enzymatically produced by BoxAB.</text>
    </kinetics>
    <phDependence>
        <text evidence="2">Optimum pH is 9.</text>
    </phDependence>
</comment>
<comment type="subunit">
    <text evidence="2">Homodimer.</text>
</comment>
<comment type="induction">
    <text evidence="1">By benzoate.</text>
</comment>
<comment type="similarity">
    <text evidence="4">Belongs to the benzoyl-CoA oxygenase component C family.</text>
</comment>
<dbReference type="EC" id="4.1.2.44" evidence="2 3"/>
<dbReference type="EMBL" id="AF548005">
    <property type="protein sequence ID" value="AAN39375.1"/>
    <property type="molecule type" value="Genomic_DNA"/>
</dbReference>
<dbReference type="RefSeq" id="WP_169125308.1">
    <property type="nucleotide sequence ID" value="NZ_CAWPLS010000221.1"/>
</dbReference>
<dbReference type="SMR" id="Q84HH6"/>
<dbReference type="KEGG" id="ag:AAN39375"/>
<dbReference type="BioCyc" id="MetaCyc:MONOMER-15412"/>
<dbReference type="BRENDA" id="4.1.2.44">
    <property type="organism ID" value="603"/>
</dbReference>
<dbReference type="SABIO-RK" id="Q84HH6"/>
<dbReference type="GO" id="GO:0016829">
    <property type="term" value="F:lyase activity"/>
    <property type="evidence" value="ECO:0007669"/>
    <property type="project" value="UniProtKB-KW"/>
</dbReference>
<dbReference type="GO" id="GO:0006635">
    <property type="term" value="P:fatty acid beta-oxidation"/>
    <property type="evidence" value="ECO:0007669"/>
    <property type="project" value="TreeGrafter"/>
</dbReference>
<dbReference type="CDD" id="cd06558">
    <property type="entry name" value="crotonase-like"/>
    <property type="match status" value="1"/>
</dbReference>
<dbReference type="Gene3D" id="3.90.226.10">
    <property type="entry name" value="2-enoyl-CoA Hydratase, Chain A, domain 1"/>
    <property type="match status" value="2"/>
</dbReference>
<dbReference type="InterPro" id="IPR017633">
    <property type="entry name" value="Benz-CoA_dihydrodiol_lyase"/>
</dbReference>
<dbReference type="InterPro" id="IPR029045">
    <property type="entry name" value="ClpP/crotonase-like_dom_sf"/>
</dbReference>
<dbReference type="InterPro" id="IPR001753">
    <property type="entry name" value="Enoyl-CoA_hydra/iso"/>
</dbReference>
<dbReference type="NCBIfam" id="TIGR03222">
    <property type="entry name" value="benzo_boxC"/>
    <property type="match status" value="1"/>
</dbReference>
<dbReference type="PANTHER" id="PTHR11941:SF54">
    <property type="entry name" value="ENOYL-COA HYDRATASE, MITOCHONDRIAL"/>
    <property type="match status" value="1"/>
</dbReference>
<dbReference type="PANTHER" id="PTHR11941">
    <property type="entry name" value="ENOYL-COA HYDRATASE-RELATED"/>
    <property type="match status" value="1"/>
</dbReference>
<dbReference type="Pfam" id="PF00378">
    <property type="entry name" value="ECH_1"/>
    <property type="match status" value="1"/>
</dbReference>
<dbReference type="SUPFAM" id="SSF52096">
    <property type="entry name" value="ClpP/crotonase"/>
    <property type="match status" value="2"/>
</dbReference>
<keyword id="KW-0058">Aromatic hydrocarbons catabolism</keyword>
<keyword id="KW-0903">Direct protein sequencing</keyword>
<keyword id="KW-0456">Lyase</keyword>
<evidence type="ECO:0000269" key="1">
    <source>
    </source>
</evidence>
<evidence type="ECO:0000269" key="2">
    <source>
    </source>
</evidence>
<evidence type="ECO:0000269" key="3">
    <source>
    </source>
</evidence>
<evidence type="ECO:0000305" key="4"/>
<evidence type="ECO:0000305" key="5">
    <source>
    </source>
</evidence>
<reference key="1">
    <citation type="journal article" date="2002" name="J. Bacteriol.">
        <title>Genes coding for a new pathway of aerobic benzoate metabolism in Azoarcus evansii.</title>
        <authorList>
            <person name="Gescher J."/>
            <person name="Zaar A."/>
            <person name="Mohamed M.E.-S."/>
            <person name="Schaegger H."/>
            <person name="Fuchs G."/>
        </authorList>
    </citation>
    <scope>NUCLEOTIDE SEQUENCE [GENOMIC DNA]</scope>
    <scope>PROTEIN SEQUENCE OF 1-20</scope>
    <scope>INDUCTION</scope>
    <source>
        <strain>DSM 6898 / NBRC 107771 / KB740</strain>
    </source>
</reference>
<reference key="2">
    <citation type="journal article" date="2005" name="Mol. Microbiol.">
        <title>Aerobic benzoyl-CoA catabolic pathway in Azoarcus evansii: studies on the non-oxygenolytic ring cleavage enzyme.</title>
        <authorList>
            <person name="Gescher J."/>
            <person name="Eisenreich W."/>
            <person name="Woerth J."/>
            <person name="Bacher A."/>
            <person name="Fuchs G."/>
        </authorList>
    </citation>
    <scope>CATALYTIC ACTIVITY</scope>
    <scope>FUNCTION</scope>
    <scope>BIOPHYSICOCHEMICAL PROPERTIES</scope>
    <scope>CHARACTERIZATION</scope>
    <scope>SUBUNIT</scope>
    <source>
        <strain>DSM 6898 / NBRC 107771 / KB740</strain>
    </source>
</reference>
<reference key="3">
    <citation type="journal article" date="2010" name="J. Biol. Chem.">
        <title>Coenzyme A-dependent aerobic metabolism of benzoate via epoxide formation.</title>
        <authorList>
            <person name="Rather L.J."/>
            <person name="Knapp B."/>
            <person name="Haehnel W."/>
            <person name="Fuchs G."/>
        </authorList>
    </citation>
    <scope>CATALYTIC ACTIVITY</scope>
    <scope>REACTION MECHANISM</scope>
</reference>
<proteinExistence type="evidence at protein level"/>
<accession>Q84HH6</accession>
<organism>
    <name type="scientific">Aromatoleum evansii</name>
    <name type="common">Azoarcus evansii</name>
    <dbReference type="NCBI Taxonomy" id="59406"/>
    <lineage>
        <taxon>Bacteria</taxon>
        <taxon>Pseudomonadati</taxon>
        <taxon>Pseudomonadota</taxon>
        <taxon>Betaproteobacteria</taxon>
        <taxon>Rhodocyclales</taxon>
        <taxon>Rhodocyclaceae</taxon>
        <taxon>Aromatoleum</taxon>
    </lineage>
</organism>
<protein>
    <recommendedName>
        <fullName>Benzoyl-CoA-dihydrodiol lyase</fullName>
        <ecNumber evidence="2 3">4.1.2.44</ecNumber>
    </recommendedName>
</protein>